<keyword id="KW-0027">Amidation</keyword>
<keyword id="KW-0966">Cell projection</keyword>
<keyword id="KW-0165">Cleavage on pair of basic residues</keyword>
<keyword id="KW-0903">Direct protein sequencing</keyword>
<keyword id="KW-0391">Immunity</keyword>
<keyword id="KW-0399">Innate immunity</keyword>
<keyword id="KW-1185">Reference proteome</keyword>
<keyword id="KW-0964">Secreted</keyword>
<keyword id="KW-0732">Signal</keyword>
<accession>P01297</accession>
<accession>A0A4X1UK00</accession>
<name>NMB_PIG</name>
<reference evidence="8" key="1">
    <citation type="submission" date="2017-08" db="EMBL/GenBank/DDBJ databases">
        <title>USMARCv1.0.</title>
        <authorList>
            <person name="Hannum G.I."/>
            <person name="Koren S."/>
            <person name="Schroeder S.G."/>
            <person name="Chin S.C."/>
            <person name="Nonneman D.J."/>
            <person name="Becker S.A."/>
            <person name="Rosen B.D."/>
            <person name="Bickhart D.M."/>
            <person name="Putnam N.H."/>
            <person name="Green R.E."/>
            <person name="Tuggle C.K."/>
            <person name="Liu H."/>
            <person name="Rohrer G.A."/>
            <person name="Warr A."/>
            <person name="Hall R."/>
            <person name="Kim K."/>
            <person name="Hume D.A."/>
            <person name="Talbot R."/>
            <person name="Chow W."/>
            <person name="Howe K."/>
            <person name="Schwartz A.S."/>
            <person name="Watson M."/>
            <person name="Archibald A.L."/>
            <person name="Phillippy A.M."/>
            <person name="Smith T.P.L."/>
        </authorList>
    </citation>
    <scope>NUCLEOTIDE SEQUENCE [LARGE SCALE GENOMIC DNA]</scope>
</reference>
<reference key="2">
    <citation type="journal article" date="1985" name="Biochem. Biophys. Res. Commun.">
        <title>Neuromedin B-32 and B-30: two 'big' neuromedin B identified in porcine brain and spinal cord.</title>
        <authorList>
            <person name="Minamino N."/>
            <person name="Sudoh T."/>
            <person name="Kangawa K."/>
            <person name="Matsuo H."/>
        </authorList>
    </citation>
    <scope>PROTEIN SEQUENCE OF 25-56</scope>
</reference>
<reference key="3">
    <citation type="journal article" date="1987" name="Regul. Pept.">
        <title>Neuromedin B and neuromedin C: two mammalian bombesin-like peptides identified in pig spinal cord and brain.</title>
        <authorList>
            <person name="Minamino N."/>
            <person name="Kangawa K."/>
            <person name="Matsuo H."/>
        </authorList>
    </citation>
    <scope>PROTEIN SEQUENCE OF 25-56</scope>
</reference>
<reference key="4">
    <citation type="journal article" date="1983" name="Biochem. Biophys. Res. Commun.">
        <title>Neuromedin B: a novel bombesin-like peptide identified in porcine spinal cord.</title>
        <authorList>
            <person name="Minamino N."/>
            <person name="Kangawa K."/>
            <person name="Matsuo H."/>
        </authorList>
    </citation>
    <scope>PROTEIN SEQUENCE OF 47-56</scope>
    <scope>FUNCTION</scope>
    <scope>AMIDATION AT MET-56</scope>
</reference>
<reference key="5">
    <citation type="journal article" date="2016" name="PLoS ONE">
        <title>Neuromedin B and Its Receptor: Gene Cloning, Tissue Distribution and Expression Levels of the Reproductive Axis in Pigs.</title>
        <authorList>
            <person name="Ma Z."/>
            <person name="Su J."/>
            <person name="Guo T."/>
            <person name="Jin M."/>
            <person name="Li X."/>
            <person name="Lei Z."/>
            <person name="Hou Y."/>
            <person name="Li X."/>
            <person name="Jia C."/>
            <person name="Zhang Z."/>
            <person name="Ahmed E."/>
        </authorList>
    </citation>
    <scope>TISSUE SPECIFICITY</scope>
    <scope>DEVELOPMENTAL STAGE</scope>
</reference>
<reference key="6">
    <citation type="journal article" date="2018" name="J. Mol. Endocrinol.">
        <title>Effects of neuromedin B on steroidogenesis, cell proliferation and apoptosis in porcine Leydig cells.</title>
        <authorList>
            <person name="Ma Z."/>
            <person name="Zhang Y."/>
            <person name="Su J."/>
            <person name="Yang S."/>
            <person name="Qiao W."/>
            <person name="Li X."/>
            <person name="Lei Z."/>
            <person name="Cheng L."/>
            <person name="An N."/>
            <person name="Wang W."/>
            <person name="Feng Y."/>
            <person name="Zhang J."/>
        </authorList>
    </citation>
    <scope>FUNCTION</scope>
</reference>
<organism>
    <name type="scientific">Sus scrofa</name>
    <name type="common">Pig</name>
    <dbReference type="NCBI Taxonomy" id="9823"/>
    <lineage>
        <taxon>Eukaryota</taxon>
        <taxon>Metazoa</taxon>
        <taxon>Chordata</taxon>
        <taxon>Craniata</taxon>
        <taxon>Vertebrata</taxon>
        <taxon>Euteleostomi</taxon>
        <taxon>Mammalia</taxon>
        <taxon>Eutheria</taxon>
        <taxon>Laurasiatheria</taxon>
        <taxon>Artiodactyla</taxon>
        <taxon>Suina</taxon>
        <taxon>Suidae</taxon>
        <taxon>Sus</taxon>
    </lineage>
</organism>
<protein>
    <recommendedName>
        <fullName>Neuromedin-B</fullName>
    </recommendedName>
    <component>
        <recommendedName>
            <fullName>Neuromedin-B-32</fullName>
        </recommendedName>
    </component>
    <component>
        <recommendedName>
            <fullName>Neuromedin-B-30</fullName>
        </recommendedName>
    </component>
    <component>
        <recommendedName>
            <fullName>Neuromedin-B</fullName>
        </recommendedName>
    </component>
</protein>
<proteinExistence type="evidence at protein level"/>
<feature type="signal peptide" evidence="4 6">
    <location>
        <begin position="1"/>
        <end position="24"/>
    </location>
</feature>
<feature type="peptide" id="PRO_0000045912" description="Neuromedin-B-32" evidence="4 6">
    <location>
        <begin position="25"/>
        <end position="56"/>
    </location>
</feature>
<feature type="peptide" id="PRO_0000262471" description="Neuromedin-B-30" evidence="4">
    <location>
        <begin position="27"/>
        <end position="56"/>
    </location>
</feature>
<feature type="peptide" id="PRO_0000003023" description="Neuromedin-B" evidence="5">
    <location>
        <begin position="47"/>
        <end position="56"/>
    </location>
</feature>
<feature type="propeptide" id="PRO_0000455630" evidence="4 5 6">
    <location>
        <begin position="60"/>
        <end position="121"/>
    </location>
</feature>
<feature type="modified residue" description="Methionine amide" evidence="5">
    <location>
        <position position="56"/>
    </location>
</feature>
<dbReference type="PIR" id="B60301">
    <property type="entry name" value="BSPGNB"/>
</dbReference>
<dbReference type="RefSeq" id="NP_001116617.1">
    <property type="nucleotide sequence ID" value="NM_001123145.1"/>
</dbReference>
<dbReference type="STRING" id="9823.ENSSSCP00000052219"/>
<dbReference type="PaxDb" id="9823-ENSSSCP00000027260"/>
<dbReference type="Ensembl" id="ENSSSCT00000055284.3">
    <property type="protein sequence ID" value="ENSSSCP00000052219.3"/>
    <property type="gene ID" value="ENSSSCG00000036907.3"/>
</dbReference>
<dbReference type="Ensembl" id="ENSSSCT00025088850.1">
    <property type="protein sequence ID" value="ENSSSCP00025038837.1"/>
    <property type="gene ID" value="ENSSSCG00025064766.1"/>
</dbReference>
<dbReference type="Ensembl" id="ENSSSCT00065015100.1">
    <property type="protein sequence ID" value="ENSSSCP00065006159.1"/>
    <property type="gene ID" value="ENSSSCG00065011355.1"/>
</dbReference>
<dbReference type="Ensembl" id="ENSSSCT00070034629.1">
    <property type="protein sequence ID" value="ENSSSCP00070028926.1"/>
    <property type="gene ID" value="ENSSSCG00070017548.1"/>
</dbReference>
<dbReference type="Ensembl" id="ENSSSCT00115009661">
    <property type="protein sequence ID" value="ENSSSCP00115009084"/>
    <property type="gene ID" value="ENSSSCG00115005590"/>
</dbReference>
<dbReference type="GeneID" id="100141313"/>
<dbReference type="KEGG" id="ssc:100141313"/>
<dbReference type="CTD" id="4828"/>
<dbReference type="VGNC" id="VGNC:109471">
    <property type="gene designation" value="NMB"/>
</dbReference>
<dbReference type="eggNOG" id="ENOG502S66V">
    <property type="taxonomic scope" value="Eukaryota"/>
</dbReference>
<dbReference type="GeneTree" id="ENSGT00940000154470"/>
<dbReference type="HOGENOM" id="CLU_208788_0_0_1"/>
<dbReference type="InParanoid" id="P01297"/>
<dbReference type="OMA" id="PSGCKSW"/>
<dbReference type="OrthoDB" id="9535999at2759"/>
<dbReference type="Reactome" id="R-SSC-375276">
    <property type="pathway name" value="Peptide ligand-binding receptors"/>
</dbReference>
<dbReference type="Reactome" id="R-SSC-416476">
    <property type="pathway name" value="G alpha (q) signalling events"/>
</dbReference>
<dbReference type="Proteomes" id="UP000008227">
    <property type="component" value="Chromosome 7"/>
</dbReference>
<dbReference type="Proteomes" id="UP000314985">
    <property type="component" value="Chromosome 7"/>
</dbReference>
<dbReference type="Proteomes" id="UP000694570">
    <property type="component" value="Unplaced"/>
</dbReference>
<dbReference type="Proteomes" id="UP000694571">
    <property type="component" value="Unplaced"/>
</dbReference>
<dbReference type="Proteomes" id="UP000694720">
    <property type="component" value="Unplaced"/>
</dbReference>
<dbReference type="Proteomes" id="UP000694722">
    <property type="component" value="Unplaced"/>
</dbReference>
<dbReference type="Proteomes" id="UP000694723">
    <property type="component" value="Unplaced"/>
</dbReference>
<dbReference type="Proteomes" id="UP000694724">
    <property type="component" value="Unplaced"/>
</dbReference>
<dbReference type="Proteomes" id="UP000694725">
    <property type="component" value="Unplaced"/>
</dbReference>
<dbReference type="Proteomes" id="UP000694726">
    <property type="component" value="Unplaced"/>
</dbReference>
<dbReference type="Proteomes" id="UP000694727">
    <property type="component" value="Unplaced"/>
</dbReference>
<dbReference type="Proteomes" id="UP000694728">
    <property type="component" value="Unplaced"/>
</dbReference>
<dbReference type="GO" id="GO:0005615">
    <property type="term" value="C:extracellular space"/>
    <property type="evidence" value="ECO:0000250"/>
    <property type="project" value="UniProtKB"/>
</dbReference>
<dbReference type="GO" id="GO:0043005">
    <property type="term" value="C:neuron projection"/>
    <property type="evidence" value="ECO:0000250"/>
    <property type="project" value="UniProtKB"/>
</dbReference>
<dbReference type="GO" id="GO:0031710">
    <property type="term" value="F:neuromedin B receptor binding"/>
    <property type="evidence" value="ECO:0000318"/>
    <property type="project" value="GO_Central"/>
</dbReference>
<dbReference type="GO" id="GO:0005184">
    <property type="term" value="F:neuropeptide hormone activity"/>
    <property type="evidence" value="ECO:0000318"/>
    <property type="project" value="GO_Central"/>
</dbReference>
<dbReference type="GO" id="GO:0140374">
    <property type="term" value="P:antiviral innate immune response"/>
    <property type="evidence" value="ECO:0000250"/>
    <property type="project" value="UniProtKB"/>
</dbReference>
<dbReference type="GO" id="GO:0160024">
    <property type="term" value="P:Leydig cell proliferation"/>
    <property type="evidence" value="ECO:0000314"/>
    <property type="project" value="UniProtKB"/>
</dbReference>
<dbReference type="GO" id="GO:0032715">
    <property type="term" value="P:negative regulation of interleukin-6 production"/>
    <property type="evidence" value="ECO:0000250"/>
    <property type="project" value="UniProtKB"/>
</dbReference>
<dbReference type="GO" id="GO:0007218">
    <property type="term" value="P:neuropeptide signaling pathway"/>
    <property type="evidence" value="ECO:0007669"/>
    <property type="project" value="InterPro"/>
</dbReference>
<dbReference type="GO" id="GO:0046887">
    <property type="term" value="P:positive regulation of hormone secretion"/>
    <property type="evidence" value="ECO:0000318"/>
    <property type="project" value="GO_Central"/>
</dbReference>
<dbReference type="GO" id="GO:0032727">
    <property type="term" value="P:positive regulation of interferon-alpha production"/>
    <property type="evidence" value="ECO:0000250"/>
    <property type="project" value="UniProtKB"/>
</dbReference>
<dbReference type="GO" id="GO:0090290">
    <property type="term" value="P:positive regulation of osteoclast proliferation"/>
    <property type="evidence" value="ECO:0000250"/>
    <property type="project" value="UniProtKB"/>
</dbReference>
<dbReference type="GO" id="GO:1903942">
    <property type="term" value="P:positive regulation of respiratory gaseous exchange"/>
    <property type="evidence" value="ECO:0000250"/>
    <property type="project" value="UniProtKB"/>
</dbReference>
<dbReference type="GO" id="GO:2000845">
    <property type="term" value="P:positive regulation of testosterone secretion"/>
    <property type="evidence" value="ECO:0000314"/>
    <property type="project" value="UniProtKB"/>
</dbReference>
<dbReference type="GO" id="GO:0160025">
    <property type="term" value="P:sensory perception of itch"/>
    <property type="evidence" value="ECO:0000250"/>
    <property type="project" value="UniProtKB"/>
</dbReference>
<dbReference type="GO" id="GO:0160023">
    <property type="term" value="P:sneeze reflex"/>
    <property type="evidence" value="ECO:0000250"/>
    <property type="project" value="UniProtKB"/>
</dbReference>
<dbReference type="InterPro" id="IPR000874">
    <property type="entry name" value="Bombesin"/>
</dbReference>
<dbReference type="PANTHER" id="PTHR16866">
    <property type="entry name" value="GASTRIN-RELEASING PEPTIDE"/>
    <property type="match status" value="1"/>
</dbReference>
<dbReference type="PANTHER" id="PTHR16866:SF3">
    <property type="entry name" value="NEUROMEDIN-B"/>
    <property type="match status" value="1"/>
</dbReference>
<dbReference type="Pfam" id="PF02044">
    <property type="entry name" value="Bombesin"/>
    <property type="match status" value="1"/>
</dbReference>
<dbReference type="PROSITE" id="PS00257">
    <property type="entry name" value="BOMBESIN"/>
    <property type="match status" value="1"/>
</dbReference>
<comment type="function">
    <text evidence="1 3 5">Stimulates smooth muscle contraction (PubMed:6882442). Induces sighing by acting directly on the pre-Botzinger complex, a cluster of several thousand neurons in the ventrolateral medulla responsible for inspiration during respiratory activity (By similarity). Contributes to the induction of sneezing following exposure to chemical irritants or allergens which causes release of NMB by nasal sensory neurons and activation of NMBR-expressing neurons in the sneeze-evoking region of the brainstem (By similarity). These in turn activate neurons of the caudal ventral respiratory group, giving rise to the sneezing response (By similarity). Contributes to induction of acute itch, possibly through activation of the NMBR receptor on dorsal root ganglion neurons (By similarity). Increases expression of NMBR and steroidogenic mediators STAR, CYP11A1 and HSD3B1 in Leydig cells, induces secretion of testosterone by Leydig cells and also promotes Leydig cell proliferation (PubMed:29632025). Plays a role in the innate immune response to influenza A virus infection by enhancing interferon alpha expression and reducing expression of IL6 (By similarity). Plays a role in CSF1-induced proliferation of osteoclast precursors by contributing to positive regulation of the expression of the CSF1 receptor CSF1R (By similarity).</text>
</comment>
<comment type="subcellular location">
    <subcellularLocation>
        <location evidence="1">Secreted</location>
    </subcellularLocation>
    <subcellularLocation>
        <location evidence="1">Cell projection</location>
        <location evidence="1">Neuron projection</location>
    </subcellularLocation>
    <text evidence="1">In neurons of the retrotrapezoid nucleus//parafacial respiratory group, expressed on neuron projections which project into the pre-Botzinger complex.</text>
</comment>
<comment type="tissue specificity">
    <text evidence="2">Higher expression in the central nervous system (CNS) than in peripheral tissues. Highest levels are found in the olfactory bulb. Relatively high levels in the CNS (including the cerebral cortex, cerebellum, spinal cord, medulla oblongata, midbrain, hypothalamus, hippocampus, and hypophysis) and in peripheral tissues such as the pancreas, adrenal gland, testis, ovary and cecum. Moderate levels are found in the rectum, heart and pons with low expression levels detected in the bone marrow and duodenum. Other tissues show no or low levels of expression.</text>
</comment>
<comment type="developmental stage">
    <text evidence="2">During the sow estrus cycle, highest levels are found in the hypothalamus during proestrus, decrease during estrus and metestrus and increase again during diestrus. In the pituitary gland, levels decrease from proestrus to estrus, increase at metestrus and decrease again at diestrus. In the ovary, expression peaks at proestrus, decreases slightly at estrus, decreases significantly at metestrus and increases at diestrus. During boar postnatal development, expression peaks in the hypothalamus at day 60 and decreases thereafter. In the pituitary gland, expression peaks at day 30 and decreases thereafter. In the testis, expression peaks at day 3 with lowest levels at day 60 and expression then gradually increases from day 60 to day 120.</text>
</comment>
<comment type="similarity">
    <text evidence="7">Belongs to the bombesin/neuromedin-B/ranatensin family.</text>
</comment>
<gene>
    <name type="primary">NMB</name>
</gene>
<sequence>MTLRARGARLLGGLLFFTLLAAGAAPLSWDLPEPRSRAGKIRVHPRGNLWATGHFMGKKSLEPPNPSLLGTTHHISLRDQRLQLSHDLLRILLQKKALGLSLSGPASHTPYRRLLVQTLEK</sequence>
<evidence type="ECO:0000250" key="1">
    <source>
        <dbReference type="UniProtKB" id="Q9CR53"/>
    </source>
</evidence>
<evidence type="ECO:0000269" key="2">
    <source>
    </source>
</evidence>
<evidence type="ECO:0000269" key="3">
    <source>
    </source>
</evidence>
<evidence type="ECO:0000269" key="4">
    <source>
    </source>
</evidence>
<evidence type="ECO:0000269" key="5">
    <source>
    </source>
</evidence>
<evidence type="ECO:0000269" key="6">
    <source ref="3"/>
</evidence>
<evidence type="ECO:0000305" key="7"/>
<evidence type="ECO:0000312" key="8">
    <source>
        <dbReference type="Proteomes" id="UP000314985"/>
    </source>
</evidence>